<organism>
    <name type="scientific">Bacillus subtilis (strain 168)</name>
    <dbReference type="NCBI Taxonomy" id="224308"/>
    <lineage>
        <taxon>Bacteria</taxon>
        <taxon>Bacillati</taxon>
        <taxon>Bacillota</taxon>
        <taxon>Bacilli</taxon>
        <taxon>Bacillales</taxon>
        <taxon>Bacillaceae</taxon>
        <taxon>Bacillus</taxon>
    </lineage>
</organism>
<sequence>MSIYKALTIAGSDSGGGAGIQADIKTFQELDVFGMSAITAVTAQNTLGVHGVHPLTVETLRQQIDAVAEDLRPDAVKTGMLWNADMIEEVARKIDEYGFNRVIVDPVMIAKGGASLLRDESVATLKELLIPRSYAITPNVPEAETLTGMTISSLDDRKKAAEQLVKMGAQHVIIKGGHQPEDNHITDLLFDGSMFMQITHPYINTKHTHGTGCTFAAALTAQTAKGDSIHQAFEVAANFVREAVENTLGIGSGHGPTNHFAFKRNSLNTSR</sequence>
<accession>O31620</accession>
<name>THID_BACSU</name>
<proteinExistence type="evidence at protein level"/>
<protein>
    <recommendedName>
        <fullName>Hydroxymethylpyrimidine/phosphomethylpyrimidine kinase</fullName>
        <ecNumber evidence="2">2.7.1.49</ecNumber>
        <ecNumber evidence="2">2.7.4.7</ecNumber>
    </recommendedName>
    <alternativeName>
        <fullName>Hydroxymethylpyrimidine kinase</fullName>
        <shortName>HMP kinase</shortName>
    </alternativeName>
    <alternativeName>
        <fullName>Hydroxymethylpyrimidine phosphate kinase</fullName>
        <shortName>HMP-P kinase</shortName>
        <shortName>HMP-phosphate kinase</shortName>
        <shortName>HMPP kinase</shortName>
    </alternativeName>
</protein>
<keyword id="KW-0067">ATP-binding</keyword>
<keyword id="KW-0418">Kinase</keyword>
<keyword id="KW-0547">Nucleotide-binding</keyword>
<keyword id="KW-1185">Reference proteome</keyword>
<keyword id="KW-0784">Thiamine biosynthesis</keyword>
<keyword id="KW-0808">Transferase</keyword>
<comment type="function">
    <text evidence="2">Catalyzes the phosphorylation of hydroxymethylpyrimidine phosphate (HMP-P) to HMP-PP, and of HMP to HMP-P. Shows no activity with pyridoxal, pyridoxamine or pyridoxine.</text>
</comment>
<comment type="catalytic activity">
    <reaction evidence="2">
        <text>4-amino-5-hydroxymethyl-2-methylpyrimidine + ATP = 4-amino-2-methyl-5-(phosphooxymethyl)pyrimidine + ADP + H(+)</text>
        <dbReference type="Rhea" id="RHEA:23096"/>
        <dbReference type="ChEBI" id="CHEBI:15378"/>
        <dbReference type="ChEBI" id="CHEBI:16892"/>
        <dbReference type="ChEBI" id="CHEBI:30616"/>
        <dbReference type="ChEBI" id="CHEBI:58354"/>
        <dbReference type="ChEBI" id="CHEBI:456216"/>
        <dbReference type="EC" id="2.7.1.49"/>
    </reaction>
</comment>
<comment type="catalytic activity">
    <reaction evidence="2">
        <text>4-amino-2-methyl-5-(phosphooxymethyl)pyrimidine + ATP = 4-amino-2-methyl-5-(diphosphooxymethyl)pyrimidine + ADP</text>
        <dbReference type="Rhea" id="RHEA:19893"/>
        <dbReference type="ChEBI" id="CHEBI:30616"/>
        <dbReference type="ChEBI" id="CHEBI:57841"/>
        <dbReference type="ChEBI" id="CHEBI:58354"/>
        <dbReference type="ChEBI" id="CHEBI:456216"/>
        <dbReference type="EC" id="2.7.4.7"/>
    </reaction>
</comment>
<comment type="pathway">
    <text>Cofactor biosynthesis; thiamine diphosphate biosynthesis; 4-amino-2-methyl-5-diphosphomethylpyrimidine from 5-amino-1-(5-phospho-D-ribosyl)imidazole: step 2/3.</text>
</comment>
<comment type="pathway">
    <text>Cofactor biosynthesis; thiamine diphosphate biosynthesis; 4-amino-2-methyl-5-diphosphomethylpyrimidine from 5-amino-1-(5-phospho-D-ribosyl)imidazole: step 3/3.</text>
</comment>
<comment type="similarity">
    <text evidence="3">Belongs to the ThiD family.</text>
</comment>
<dbReference type="EC" id="2.7.1.49" evidence="2"/>
<dbReference type="EC" id="2.7.4.7" evidence="2"/>
<dbReference type="EMBL" id="AL009126">
    <property type="protein sequence ID" value="CAB13028.1"/>
    <property type="molecule type" value="Genomic_DNA"/>
</dbReference>
<dbReference type="PIR" id="F69845">
    <property type="entry name" value="F69845"/>
</dbReference>
<dbReference type="RefSeq" id="NP_389053.1">
    <property type="nucleotide sequence ID" value="NC_000964.3"/>
</dbReference>
<dbReference type="RefSeq" id="WP_003245050.1">
    <property type="nucleotide sequence ID" value="NZ_OZ025638.1"/>
</dbReference>
<dbReference type="SMR" id="O31620"/>
<dbReference type="FunCoup" id="O31620">
    <property type="interactions" value="569"/>
</dbReference>
<dbReference type="STRING" id="224308.BSU11710"/>
<dbReference type="PaxDb" id="224308-BSU11710"/>
<dbReference type="EnsemblBacteria" id="CAB13028">
    <property type="protein sequence ID" value="CAB13028"/>
    <property type="gene ID" value="BSU_11710"/>
</dbReference>
<dbReference type="GeneID" id="936415"/>
<dbReference type="KEGG" id="bsu:BSU11710"/>
<dbReference type="PATRIC" id="fig|224308.179.peg.1260"/>
<dbReference type="eggNOG" id="COG0351">
    <property type="taxonomic scope" value="Bacteria"/>
</dbReference>
<dbReference type="InParanoid" id="O31620"/>
<dbReference type="OrthoDB" id="9810880at2"/>
<dbReference type="PhylomeDB" id="O31620"/>
<dbReference type="BioCyc" id="BSUB:BSU11710-MONOMER"/>
<dbReference type="BioCyc" id="MetaCyc:BSU11710-MONOMER"/>
<dbReference type="UniPathway" id="UPA00060">
    <property type="reaction ID" value="UER00137"/>
</dbReference>
<dbReference type="UniPathway" id="UPA00060">
    <property type="reaction ID" value="UER00138"/>
</dbReference>
<dbReference type="Proteomes" id="UP000001570">
    <property type="component" value="Chromosome"/>
</dbReference>
<dbReference type="GO" id="GO:0005829">
    <property type="term" value="C:cytosol"/>
    <property type="evidence" value="ECO:0000318"/>
    <property type="project" value="GO_Central"/>
</dbReference>
<dbReference type="GO" id="GO:0005524">
    <property type="term" value="F:ATP binding"/>
    <property type="evidence" value="ECO:0007669"/>
    <property type="project" value="UniProtKB-KW"/>
</dbReference>
<dbReference type="GO" id="GO:0008902">
    <property type="term" value="F:hydroxymethylpyrimidine kinase activity"/>
    <property type="evidence" value="ECO:0000318"/>
    <property type="project" value="GO_Central"/>
</dbReference>
<dbReference type="GO" id="GO:0008972">
    <property type="term" value="F:phosphomethylpyrimidine kinase activity"/>
    <property type="evidence" value="ECO:0000318"/>
    <property type="project" value="GO_Central"/>
</dbReference>
<dbReference type="GO" id="GO:0009228">
    <property type="term" value="P:thiamine biosynthetic process"/>
    <property type="evidence" value="ECO:0000318"/>
    <property type="project" value="GO_Central"/>
</dbReference>
<dbReference type="GO" id="GO:0009229">
    <property type="term" value="P:thiamine diphosphate biosynthetic process"/>
    <property type="evidence" value="ECO:0007669"/>
    <property type="project" value="UniProtKB-UniPathway"/>
</dbReference>
<dbReference type="CDD" id="cd01169">
    <property type="entry name" value="HMPP_kinase"/>
    <property type="match status" value="1"/>
</dbReference>
<dbReference type="FunFam" id="3.40.1190.20:FF:000003">
    <property type="entry name" value="Phosphomethylpyrimidine kinase ThiD"/>
    <property type="match status" value="1"/>
</dbReference>
<dbReference type="Gene3D" id="3.40.1190.20">
    <property type="match status" value="1"/>
</dbReference>
<dbReference type="InterPro" id="IPR004399">
    <property type="entry name" value="HMP/HMP-P_kinase_dom"/>
</dbReference>
<dbReference type="InterPro" id="IPR013749">
    <property type="entry name" value="PM/HMP-P_kinase-1"/>
</dbReference>
<dbReference type="InterPro" id="IPR029056">
    <property type="entry name" value="Ribokinase-like"/>
</dbReference>
<dbReference type="NCBIfam" id="TIGR00097">
    <property type="entry name" value="HMP-P_kinase"/>
    <property type="match status" value="1"/>
</dbReference>
<dbReference type="PANTHER" id="PTHR20858:SF17">
    <property type="entry name" value="HYDROXYMETHYLPYRIMIDINE_PHOSPHOMETHYLPYRIMIDINE KINASE THI20-RELATED"/>
    <property type="match status" value="1"/>
</dbReference>
<dbReference type="PANTHER" id="PTHR20858">
    <property type="entry name" value="PHOSPHOMETHYLPYRIMIDINE KINASE"/>
    <property type="match status" value="1"/>
</dbReference>
<dbReference type="Pfam" id="PF08543">
    <property type="entry name" value="Phos_pyr_kin"/>
    <property type="match status" value="1"/>
</dbReference>
<dbReference type="SUPFAM" id="SSF53613">
    <property type="entry name" value="Ribokinase-like"/>
    <property type="match status" value="1"/>
</dbReference>
<feature type="chain" id="PRO_0000391753" description="Hydroxymethylpyrimidine/phosphomethylpyrimidine kinase">
    <location>
        <begin position="1"/>
        <end position="271"/>
    </location>
</feature>
<feature type="binding site" evidence="1">
    <location>
        <position position="44"/>
    </location>
    <ligand>
        <name>4-amino-5-hydroxymethyl-2-methylpyrimidine</name>
        <dbReference type="ChEBI" id="CHEBI:16892"/>
    </ligand>
</feature>
<gene>
    <name type="primary">thiD</name>
    <name type="synonym">yjbV</name>
    <name type="ordered locus">BSU11710</name>
</gene>
<reference key="1">
    <citation type="journal article" date="1997" name="Nature">
        <title>The complete genome sequence of the Gram-positive bacterium Bacillus subtilis.</title>
        <authorList>
            <person name="Kunst F."/>
            <person name="Ogasawara N."/>
            <person name="Moszer I."/>
            <person name="Albertini A.M."/>
            <person name="Alloni G."/>
            <person name="Azevedo V."/>
            <person name="Bertero M.G."/>
            <person name="Bessieres P."/>
            <person name="Bolotin A."/>
            <person name="Borchert S."/>
            <person name="Borriss R."/>
            <person name="Boursier L."/>
            <person name="Brans A."/>
            <person name="Braun M."/>
            <person name="Brignell S.C."/>
            <person name="Bron S."/>
            <person name="Brouillet S."/>
            <person name="Bruschi C.V."/>
            <person name="Caldwell B."/>
            <person name="Capuano V."/>
            <person name="Carter N.M."/>
            <person name="Choi S.-K."/>
            <person name="Codani J.-J."/>
            <person name="Connerton I.F."/>
            <person name="Cummings N.J."/>
            <person name="Daniel R.A."/>
            <person name="Denizot F."/>
            <person name="Devine K.M."/>
            <person name="Duesterhoeft A."/>
            <person name="Ehrlich S.D."/>
            <person name="Emmerson P.T."/>
            <person name="Entian K.-D."/>
            <person name="Errington J."/>
            <person name="Fabret C."/>
            <person name="Ferrari E."/>
            <person name="Foulger D."/>
            <person name="Fritz C."/>
            <person name="Fujita M."/>
            <person name="Fujita Y."/>
            <person name="Fuma S."/>
            <person name="Galizzi A."/>
            <person name="Galleron N."/>
            <person name="Ghim S.-Y."/>
            <person name="Glaser P."/>
            <person name="Goffeau A."/>
            <person name="Golightly E.J."/>
            <person name="Grandi G."/>
            <person name="Guiseppi G."/>
            <person name="Guy B.J."/>
            <person name="Haga K."/>
            <person name="Haiech J."/>
            <person name="Harwood C.R."/>
            <person name="Henaut A."/>
            <person name="Hilbert H."/>
            <person name="Holsappel S."/>
            <person name="Hosono S."/>
            <person name="Hullo M.-F."/>
            <person name="Itaya M."/>
            <person name="Jones L.-M."/>
            <person name="Joris B."/>
            <person name="Karamata D."/>
            <person name="Kasahara Y."/>
            <person name="Klaerr-Blanchard M."/>
            <person name="Klein C."/>
            <person name="Kobayashi Y."/>
            <person name="Koetter P."/>
            <person name="Koningstein G."/>
            <person name="Krogh S."/>
            <person name="Kumano M."/>
            <person name="Kurita K."/>
            <person name="Lapidus A."/>
            <person name="Lardinois S."/>
            <person name="Lauber J."/>
            <person name="Lazarevic V."/>
            <person name="Lee S.-M."/>
            <person name="Levine A."/>
            <person name="Liu H."/>
            <person name="Masuda S."/>
            <person name="Mauel C."/>
            <person name="Medigue C."/>
            <person name="Medina N."/>
            <person name="Mellado R.P."/>
            <person name="Mizuno M."/>
            <person name="Moestl D."/>
            <person name="Nakai S."/>
            <person name="Noback M."/>
            <person name="Noone D."/>
            <person name="O'Reilly M."/>
            <person name="Ogawa K."/>
            <person name="Ogiwara A."/>
            <person name="Oudega B."/>
            <person name="Park S.-H."/>
            <person name="Parro V."/>
            <person name="Pohl T.M."/>
            <person name="Portetelle D."/>
            <person name="Porwollik S."/>
            <person name="Prescott A.M."/>
            <person name="Presecan E."/>
            <person name="Pujic P."/>
            <person name="Purnelle B."/>
            <person name="Rapoport G."/>
            <person name="Rey M."/>
            <person name="Reynolds S."/>
            <person name="Rieger M."/>
            <person name="Rivolta C."/>
            <person name="Rocha E."/>
            <person name="Roche B."/>
            <person name="Rose M."/>
            <person name="Sadaie Y."/>
            <person name="Sato T."/>
            <person name="Scanlan E."/>
            <person name="Schleich S."/>
            <person name="Schroeter R."/>
            <person name="Scoffone F."/>
            <person name="Sekiguchi J."/>
            <person name="Sekowska A."/>
            <person name="Seror S.J."/>
            <person name="Serror P."/>
            <person name="Shin B.-S."/>
            <person name="Soldo B."/>
            <person name="Sorokin A."/>
            <person name="Tacconi E."/>
            <person name="Takagi T."/>
            <person name="Takahashi H."/>
            <person name="Takemaru K."/>
            <person name="Takeuchi M."/>
            <person name="Tamakoshi A."/>
            <person name="Tanaka T."/>
            <person name="Terpstra P."/>
            <person name="Tognoni A."/>
            <person name="Tosato V."/>
            <person name="Uchiyama S."/>
            <person name="Vandenbol M."/>
            <person name="Vannier F."/>
            <person name="Vassarotti A."/>
            <person name="Viari A."/>
            <person name="Wambutt R."/>
            <person name="Wedler E."/>
            <person name="Wedler H."/>
            <person name="Weitzenegger T."/>
            <person name="Winters P."/>
            <person name="Wipat A."/>
            <person name="Yamamoto H."/>
            <person name="Yamane K."/>
            <person name="Yasumoto K."/>
            <person name="Yata K."/>
            <person name="Yoshida K."/>
            <person name="Yoshikawa H.-F."/>
            <person name="Zumstein E."/>
            <person name="Yoshikawa H."/>
            <person name="Danchin A."/>
        </authorList>
    </citation>
    <scope>NUCLEOTIDE SEQUENCE [LARGE SCALE GENOMIC DNA]</scope>
    <source>
        <strain>168</strain>
    </source>
</reference>
<reference key="2">
    <citation type="journal article" date="2004" name="J. Bacteriol.">
        <title>Characterization of two kinases involved in thiamine pyrophosphate and pyridoxal phosphate biosynthesis in Bacillus subtilis: 4-amino-5-hydroxymethyl-2-methylpyrimidine kinase and pyridoxal kinase.</title>
        <authorList>
            <person name="Park J.-H."/>
            <person name="Burns K."/>
            <person name="Kinsland C."/>
            <person name="Begley T.P."/>
        </authorList>
    </citation>
    <scope>FUNCTION AS HMP AND HMP-P KINASE</scope>
    <scope>CATALYTIC ACTIVITY</scope>
    <source>
        <strain>168 / CU1065</strain>
    </source>
</reference>
<evidence type="ECO:0000250" key="1"/>
<evidence type="ECO:0000269" key="2">
    <source>
    </source>
</evidence>
<evidence type="ECO:0000305" key="3"/>